<name>RNFE_GLAP5</name>
<proteinExistence type="inferred from homology"/>
<reference key="1">
    <citation type="journal article" date="2009" name="J. Bacteriol.">
        <title>Complete genome sequence of Haemophilus parasuis SH0165.</title>
        <authorList>
            <person name="Yue M."/>
            <person name="Yang F."/>
            <person name="Yang J."/>
            <person name="Bei W."/>
            <person name="Cai X."/>
            <person name="Chen L."/>
            <person name="Dong J."/>
            <person name="Zhou R."/>
            <person name="Jin M."/>
            <person name="Jin Q."/>
            <person name="Chen H."/>
        </authorList>
    </citation>
    <scope>NUCLEOTIDE SEQUENCE [LARGE SCALE GENOMIC DNA]</scope>
    <source>
        <strain>SH0165</strain>
    </source>
</reference>
<keyword id="KW-0997">Cell inner membrane</keyword>
<keyword id="KW-1003">Cell membrane</keyword>
<keyword id="KW-0249">Electron transport</keyword>
<keyword id="KW-0472">Membrane</keyword>
<keyword id="KW-1185">Reference proteome</keyword>
<keyword id="KW-1278">Translocase</keyword>
<keyword id="KW-0812">Transmembrane</keyword>
<keyword id="KW-1133">Transmembrane helix</keyword>
<keyword id="KW-0813">Transport</keyword>
<gene>
    <name evidence="1" type="primary">rnfE</name>
    <name type="ordered locus">HAPS_1669</name>
</gene>
<sequence length="229" mass="24584">MQETQIPITQIDETPKAVEPSVWKNLFTQGVWTNNSTLVQLLGLCPLLAVSNNVTNALGLGLATLLVLTITNTIISLFRKVIPHDIRIPIYVMIIATAVTTIQLLMNAFAFPVYQSLGIFVPLIVTNCIVIGRAEAFASKNSVAHSAFDGFAMGLGMTLSLVVLGAIREIIGNGTLFDGLDLLLGSWAKALRMDLLHLDSGLLLAILPPGAFIGLGLILAVKNIIDRKK</sequence>
<organism>
    <name type="scientific">Glaesserella parasuis serovar 5 (strain SH0165)</name>
    <name type="common">Haemophilus parasuis</name>
    <dbReference type="NCBI Taxonomy" id="557723"/>
    <lineage>
        <taxon>Bacteria</taxon>
        <taxon>Pseudomonadati</taxon>
        <taxon>Pseudomonadota</taxon>
        <taxon>Gammaproteobacteria</taxon>
        <taxon>Pasteurellales</taxon>
        <taxon>Pasteurellaceae</taxon>
        <taxon>Glaesserella</taxon>
    </lineage>
</organism>
<protein>
    <recommendedName>
        <fullName evidence="1">Ion-translocating oxidoreductase complex subunit E</fullName>
        <ecNumber evidence="1">7.-.-.-</ecNumber>
    </recommendedName>
    <alternativeName>
        <fullName evidence="1">Rnf electron transport complex subunit E</fullName>
    </alternativeName>
</protein>
<comment type="function">
    <text evidence="1">Part of a membrane-bound complex that couples electron transfer with translocation of ions across the membrane.</text>
</comment>
<comment type="subunit">
    <text evidence="1">The complex is composed of six subunits: RnfA, RnfB, RnfC, RnfD, RnfE and RnfG.</text>
</comment>
<comment type="subcellular location">
    <subcellularLocation>
        <location evidence="1">Cell inner membrane</location>
        <topology evidence="1">Multi-pass membrane protein</topology>
    </subcellularLocation>
</comment>
<comment type="similarity">
    <text evidence="1">Belongs to the NqrDE/RnfAE family.</text>
</comment>
<dbReference type="EC" id="7.-.-.-" evidence="1"/>
<dbReference type="EMBL" id="CP001321">
    <property type="protein sequence ID" value="ACL33212.1"/>
    <property type="molecule type" value="Genomic_DNA"/>
</dbReference>
<dbReference type="RefSeq" id="WP_015939877.1">
    <property type="nucleotide sequence ID" value="NC_011852.1"/>
</dbReference>
<dbReference type="SMR" id="B8F7B0"/>
<dbReference type="STRING" id="557723.HAPS_1669"/>
<dbReference type="KEGG" id="hap:HAPS_1669"/>
<dbReference type="PATRIC" id="fig|557723.8.peg.1640"/>
<dbReference type="HOGENOM" id="CLU_046659_1_0_6"/>
<dbReference type="Proteomes" id="UP000006743">
    <property type="component" value="Chromosome"/>
</dbReference>
<dbReference type="GO" id="GO:0005886">
    <property type="term" value="C:plasma membrane"/>
    <property type="evidence" value="ECO:0007669"/>
    <property type="project" value="UniProtKB-SubCell"/>
</dbReference>
<dbReference type="GO" id="GO:0022900">
    <property type="term" value="P:electron transport chain"/>
    <property type="evidence" value="ECO:0007669"/>
    <property type="project" value="UniProtKB-UniRule"/>
</dbReference>
<dbReference type="HAMAP" id="MF_00478">
    <property type="entry name" value="RsxE_RnfE"/>
    <property type="match status" value="1"/>
</dbReference>
<dbReference type="InterPro" id="IPR003667">
    <property type="entry name" value="NqrDE/RnfAE"/>
</dbReference>
<dbReference type="InterPro" id="IPR010968">
    <property type="entry name" value="RnfE"/>
</dbReference>
<dbReference type="NCBIfam" id="NF009070">
    <property type="entry name" value="PRK12405.1"/>
    <property type="match status" value="1"/>
</dbReference>
<dbReference type="NCBIfam" id="TIGR01948">
    <property type="entry name" value="rnfE"/>
    <property type="match status" value="1"/>
</dbReference>
<dbReference type="PANTHER" id="PTHR30586">
    <property type="entry name" value="ELECTRON TRANSPORT COMPLEX PROTEIN RNFE"/>
    <property type="match status" value="1"/>
</dbReference>
<dbReference type="PANTHER" id="PTHR30586:SF0">
    <property type="entry name" value="ION-TRANSLOCATING OXIDOREDUCTASE COMPLEX SUBUNIT E"/>
    <property type="match status" value="1"/>
</dbReference>
<dbReference type="Pfam" id="PF02508">
    <property type="entry name" value="Rnf-Nqr"/>
    <property type="match status" value="1"/>
</dbReference>
<dbReference type="PIRSF" id="PIRSF006102">
    <property type="entry name" value="NQR_DE"/>
    <property type="match status" value="1"/>
</dbReference>
<evidence type="ECO:0000255" key="1">
    <source>
        <dbReference type="HAMAP-Rule" id="MF_00478"/>
    </source>
</evidence>
<feature type="chain" id="PRO_1000135560" description="Ion-translocating oxidoreductase complex subunit E">
    <location>
        <begin position="1"/>
        <end position="229"/>
    </location>
</feature>
<feature type="transmembrane region" description="Helical" evidence="1">
    <location>
        <begin position="58"/>
        <end position="78"/>
    </location>
</feature>
<feature type="transmembrane region" description="Helical" evidence="1">
    <location>
        <begin position="82"/>
        <end position="102"/>
    </location>
</feature>
<feature type="transmembrane region" description="Helical" evidence="1">
    <location>
        <begin position="105"/>
        <end position="125"/>
    </location>
</feature>
<feature type="transmembrane region" description="Helical" evidence="1">
    <location>
        <begin position="147"/>
        <end position="167"/>
    </location>
</feature>
<feature type="transmembrane region" description="Helical" evidence="1">
    <location>
        <begin position="201"/>
        <end position="221"/>
    </location>
</feature>
<accession>B8F7B0</accession>